<sequence>METPLREQENSLESSNERSSYISEAAAAIPESANLGEEILSQLYRPLEACYNTCYCKKCCYHCQFCFLKKGLGISYEKSHRRRRTPKKAKANTSSASNEPIPNRIRLCQPKKAKKETVEAAVATAPGLGR</sequence>
<proteinExistence type="inferred from homology"/>
<gene>
    <name type="primary">tat</name>
</gene>
<accession>P05911</accession>
<comment type="function">
    <text evidence="2">Transcriptional activator that increases RNA Pol II processivity, thereby increasing the level of full-length viral transcripts. Recognizes a hairpin structure at the 5'-LTR of the nascent viral mRNAs referred to as the transactivation responsive RNA element (TAR) and recruits the cyclin T1-CDK9 complex (P-TEFb complex) that will in turn hyperphosphorylate the RNA polymerase II to allow efficient elongation. The CDK9 component of P-TEFb and other Tat-activated kinases hyperphosphorylate the C-terminus of RNA Pol II that becomes stabilized and much more processive.</text>
</comment>
<comment type="function">
    <text evidence="1">Extracellular circulating Tat can be endocytosed by surrounding uninfected cells via the binding to several surface receptors. Endosomal low pH allows Tat to cross the endosome membrane to enter the cytosol and eventually further translocate into the nucleus, thereby inducing severe cell dysfunctions ranging from cell activation to cell death. Through (By similarity).</text>
</comment>
<comment type="subunit">
    <text evidence="1">Interacts with host CCNT1. Associates with the P-TEFb complex composed at least of Tat, P-TEFb (CDK9 and CCNT1), TAR RNA, RNA Pol II. Interacts with CCNT2; the resulting complex is unable to bind to TAR RNA (By similarity).</text>
</comment>
<comment type="subcellular location">
    <subcellularLocation>
        <location evidence="1">Host nucleus</location>
        <location evidence="1">Host nucleolus</location>
    </subcellularLocation>
</comment>
<comment type="similarity">
    <text evidence="5">Belongs to the lentiviruses Tat family.</text>
</comment>
<organismHost>
    <name type="scientific">Cercopithecidae</name>
    <name type="common">Old World monkeys</name>
    <dbReference type="NCBI Taxonomy" id="9527"/>
</organismHost>
<evidence type="ECO:0000250" key="1"/>
<evidence type="ECO:0000250" key="2">
    <source>
        <dbReference type="UniProtKB" id="P04608"/>
    </source>
</evidence>
<evidence type="ECO:0000255" key="3"/>
<evidence type="ECO:0000256" key="4">
    <source>
        <dbReference type="SAM" id="MobiDB-lite"/>
    </source>
</evidence>
<evidence type="ECO:0000305" key="5"/>
<name>TAT_SIVM1</name>
<feature type="chain" id="PRO_0000085382" description="Protein Tat">
    <location>
        <begin position="1"/>
        <end position="130"/>
    </location>
</feature>
<feature type="region of interest" description="Cysteine-rich" evidence="1">
    <location>
        <begin position="50"/>
        <end position="66"/>
    </location>
</feature>
<feature type="region of interest" description="Core" evidence="1">
    <location>
        <begin position="67"/>
        <end position="77"/>
    </location>
</feature>
<feature type="region of interest" description="Disordered" evidence="4">
    <location>
        <begin position="78"/>
        <end position="102"/>
    </location>
</feature>
<feature type="short sequence motif" description="Nuclear localization signal, and RNA-binding (TAR)" evidence="3">
    <location>
        <begin position="78"/>
        <end position="84"/>
    </location>
</feature>
<feature type="compositionally biased region" description="Basic residues" evidence="4">
    <location>
        <begin position="79"/>
        <end position="90"/>
    </location>
</feature>
<feature type="compositionally biased region" description="Polar residues" evidence="4">
    <location>
        <begin position="91"/>
        <end position="100"/>
    </location>
</feature>
<reference key="1">
    <citation type="journal article" date="1987" name="Nature">
        <title>Sequence of simian immunodeficiency virus from macaque and its relationship to other human and simian retroviruses.</title>
        <authorList>
            <person name="Chakrabarti L."/>
            <person name="Guyader M."/>
            <person name="Alizon M."/>
            <person name="Daniel M.D."/>
            <person name="Desrosiers R.C."/>
            <person name="Tiollais P."/>
            <person name="Sonigo P."/>
        </authorList>
    </citation>
    <scope>NUCLEOTIDE SEQUENCE [GENOMIC DNA]</scope>
</reference>
<organism>
    <name type="scientific">Simian immunodeficiency virus (isolate Mm142-83)</name>
    <name type="common">SIV-mac</name>
    <name type="synonym">Simian immunodeficiency virus rhesus monkey</name>
    <dbReference type="NCBI Taxonomy" id="11733"/>
    <lineage>
        <taxon>Viruses</taxon>
        <taxon>Riboviria</taxon>
        <taxon>Pararnavirae</taxon>
        <taxon>Artverviricota</taxon>
        <taxon>Revtraviricetes</taxon>
        <taxon>Ortervirales</taxon>
        <taxon>Retroviridae</taxon>
        <taxon>Orthoretrovirinae</taxon>
        <taxon>Lentivirus</taxon>
        <taxon>Simian immunodeficiency virus</taxon>
    </lineage>
</organism>
<dbReference type="EMBL" id="Y00277">
    <property type="protein sequence ID" value="CAB46521.1"/>
    <property type="molecule type" value="Genomic_DNA"/>
</dbReference>
<dbReference type="PIR" id="F28887">
    <property type="entry name" value="TNLJG3"/>
</dbReference>
<dbReference type="Proteomes" id="UP000007220">
    <property type="component" value="Segment"/>
</dbReference>
<dbReference type="GO" id="GO:0044196">
    <property type="term" value="C:host cell nucleolus"/>
    <property type="evidence" value="ECO:0007669"/>
    <property type="project" value="UniProtKB-SubCell"/>
</dbReference>
<dbReference type="GO" id="GO:0003723">
    <property type="term" value="F:RNA binding"/>
    <property type="evidence" value="ECO:0007669"/>
    <property type="project" value="UniProtKB-KW"/>
</dbReference>
<dbReference type="GO" id="GO:0001070">
    <property type="term" value="F:RNA-binding transcription regulator activity"/>
    <property type="evidence" value="ECO:0007669"/>
    <property type="project" value="InterPro"/>
</dbReference>
<dbReference type="GO" id="GO:0050434">
    <property type="term" value="P:positive regulation of viral transcription"/>
    <property type="evidence" value="ECO:0007669"/>
    <property type="project" value="InterPro"/>
</dbReference>
<dbReference type="Gene3D" id="4.10.20.10">
    <property type="entry name" value="Tat domain"/>
    <property type="match status" value="1"/>
</dbReference>
<dbReference type="InterPro" id="IPR001831">
    <property type="entry name" value="IV_Tat"/>
</dbReference>
<dbReference type="InterPro" id="IPR036963">
    <property type="entry name" value="Tat_dom_sf"/>
</dbReference>
<dbReference type="Pfam" id="PF00539">
    <property type="entry name" value="Tat"/>
    <property type="match status" value="1"/>
</dbReference>
<dbReference type="PRINTS" id="PR00055">
    <property type="entry name" value="HIVTATDOMAIN"/>
</dbReference>
<protein>
    <recommendedName>
        <fullName>Protein Tat</fullName>
    </recommendedName>
    <alternativeName>
        <fullName>Transactivating regulatory protein</fullName>
    </alternativeName>
</protein>
<keyword id="KW-0010">Activator</keyword>
<keyword id="KW-1048">Host nucleus</keyword>
<keyword id="KW-0945">Host-virus interaction</keyword>
<keyword id="KW-0694">RNA-binding</keyword>
<keyword id="KW-0804">Transcription</keyword>
<keyword id="KW-0805">Transcription regulation</keyword>